<name>RRF_ACTSZ</name>
<dbReference type="EMBL" id="CP000746">
    <property type="protein sequence ID" value="ABR74029.1"/>
    <property type="molecule type" value="Genomic_DNA"/>
</dbReference>
<dbReference type="RefSeq" id="WP_012072409.1">
    <property type="nucleotide sequence ID" value="NC_009655.1"/>
</dbReference>
<dbReference type="SMR" id="A6VM32"/>
<dbReference type="STRING" id="339671.Asuc_0656"/>
<dbReference type="KEGG" id="asu:Asuc_0656"/>
<dbReference type="eggNOG" id="COG0233">
    <property type="taxonomic scope" value="Bacteria"/>
</dbReference>
<dbReference type="HOGENOM" id="CLU_073981_2_0_6"/>
<dbReference type="OrthoDB" id="9804006at2"/>
<dbReference type="Proteomes" id="UP000001114">
    <property type="component" value="Chromosome"/>
</dbReference>
<dbReference type="GO" id="GO:0005829">
    <property type="term" value="C:cytosol"/>
    <property type="evidence" value="ECO:0007669"/>
    <property type="project" value="GOC"/>
</dbReference>
<dbReference type="GO" id="GO:0043023">
    <property type="term" value="F:ribosomal large subunit binding"/>
    <property type="evidence" value="ECO:0007669"/>
    <property type="project" value="TreeGrafter"/>
</dbReference>
<dbReference type="GO" id="GO:0002184">
    <property type="term" value="P:cytoplasmic translational termination"/>
    <property type="evidence" value="ECO:0007669"/>
    <property type="project" value="TreeGrafter"/>
</dbReference>
<dbReference type="CDD" id="cd00520">
    <property type="entry name" value="RRF"/>
    <property type="match status" value="1"/>
</dbReference>
<dbReference type="FunFam" id="1.10.132.20:FF:000001">
    <property type="entry name" value="Ribosome-recycling factor"/>
    <property type="match status" value="1"/>
</dbReference>
<dbReference type="FunFam" id="3.30.1360.40:FF:000001">
    <property type="entry name" value="Ribosome-recycling factor"/>
    <property type="match status" value="1"/>
</dbReference>
<dbReference type="Gene3D" id="3.30.1360.40">
    <property type="match status" value="1"/>
</dbReference>
<dbReference type="Gene3D" id="1.10.132.20">
    <property type="entry name" value="Ribosome-recycling factor"/>
    <property type="match status" value="1"/>
</dbReference>
<dbReference type="HAMAP" id="MF_00040">
    <property type="entry name" value="RRF"/>
    <property type="match status" value="1"/>
</dbReference>
<dbReference type="InterPro" id="IPR002661">
    <property type="entry name" value="Ribosome_recyc_fac"/>
</dbReference>
<dbReference type="InterPro" id="IPR023584">
    <property type="entry name" value="Ribosome_recyc_fac_dom"/>
</dbReference>
<dbReference type="InterPro" id="IPR036191">
    <property type="entry name" value="RRF_sf"/>
</dbReference>
<dbReference type="NCBIfam" id="TIGR00496">
    <property type="entry name" value="frr"/>
    <property type="match status" value="1"/>
</dbReference>
<dbReference type="PANTHER" id="PTHR20982:SF3">
    <property type="entry name" value="MITOCHONDRIAL RIBOSOME RECYCLING FACTOR PSEUDO 1"/>
    <property type="match status" value="1"/>
</dbReference>
<dbReference type="PANTHER" id="PTHR20982">
    <property type="entry name" value="RIBOSOME RECYCLING FACTOR"/>
    <property type="match status" value="1"/>
</dbReference>
<dbReference type="Pfam" id="PF01765">
    <property type="entry name" value="RRF"/>
    <property type="match status" value="1"/>
</dbReference>
<dbReference type="SUPFAM" id="SSF55194">
    <property type="entry name" value="Ribosome recycling factor, RRF"/>
    <property type="match status" value="1"/>
</dbReference>
<keyword id="KW-0963">Cytoplasm</keyword>
<keyword id="KW-0648">Protein biosynthesis</keyword>
<keyword id="KW-1185">Reference proteome</keyword>
<feature type="chain" id="PRO_1000071056" description="Ribosome-recycling factor">
    <location>
        <begin position="1"/>
        <end position="185"/>
    </location>
</feature>
<reference key="1">
    <citation type="journal article" date="2010" name="BMC Genomics">
        <title>A genomic perspective on the potential of Actinobacillus succinogenes for industrial succinate production.</title>
        <authorList>
            <person name="McKinlay J.B."/>
            <person name="Laivenieks M."/>
            <person name="Schindler B.D."/>
            <person name="McKinlay A.A."/>
            <person name="Siddaramappa S."/>
            <person name="Challacombe J.F."/>
            <person name="Lowry S.R."/>
            <person name="Clum A."/>
            <person name="Lapidus A.L."/>
            <person name="Burkhart K.B."/>
            <person name="Harkins V."/>
            <person name="Vieille C."/>
        </authorList>
    </citation>
    <scope>NUCLEOTIDE SEQUENCE [LARGE SCALE GENOMIC DNA]</scope>
    <source>
        <strain>ATCC 55618 / DSM 22257 / CCUG 43843 / 130Z</strain>
    </source>
</reference>
<gene>
    <name evidence="1" type="primary">frr</name>
    <name type="ordered locus">Asuc_0656</name>
</gene>
<comment type="function">
    <text evidence="1">Responsible for the release of ribosomes from messenger RNA at the termination of protein biosynthesis. May increase the efficiency of translation by recycling ribosomes from one round of translation to another.</text>
</comment>
<comment type="subcellular location">
    <subcellularLocation>
        <location evidence="1">Cytoplasm</location>
    </subcellularLocation>
</comment>
<comment type="similarity">
    <text evidence="1">Belongs to the RRF family.</text>
</comment>
<sequence length="185" mass="20708">MINEIKKDAQDRMEKSLEALKGHISKIRTGRAQPSLLDAIQVDYYGAATPLRQLANVVAEDARTLAVTVFDRSLIQAVEKAILTSDLGLNPSSAGTTIRVPLPPLTEERRRDLTKLVKAEGEQGKVAVRNVRRDANEKIKALLKDKEISENEQRKAEDDIQKLTDSFVKKVDEVLADKEKELMDF</sequence>
<proteinExistence type="inferred from homology"/>
<organism>
    <name type="scientific">Actinobacillus succinogenes (strain ATCC 55618 / DSM 22257 / CCUG 43843 / 130Z)</name>
    <dbReference type="NCBI Taxonomy" id="339671"/>
    <lineage>
        <taxon>Bacteria</taxon>
        <taxon>Pseudomonadati</taxon>
        <taxon>Pseudomonadota</taxon>
        <taxon>Gammaproteobacteria</taxon>
        <taxon>Pasteurellales</taxon>
        <taxon>Pasteurellaceae</taxon>
        <taxon>Actinobacillus</taxon>
    </lineage>
</organism>
<accession>A6VM32</accession>
<protein>
    <recommendedName>
        <fullName evidence="1">Ribosome-recycling factor</fullName>
        <shortName evidence="1">RRF</shortName>
    </recommendedName>
    <alternativeName>
        <fullName evidence="1">Ribosome-releasing factor</fullName>
    </alternativeName>
</protein>
<evidence type="ECO:0000255" key="1">
    <source>
        <dbReference type="HAMAP-Rule" id="MF_00040"/>
    </source>
</evidence>